<name>RL14_PROMH</name>
<reference key="1">
    <citation type="journal article" date="2008" name="J. Bacteriol.">
        <title>Complete genome sequence of uropathogenic Proteus mirabilis, a master of both adherence and motility.</title>
        <authorList>
            <person name="Pearson M.M."/>
            <person name="Sebaihia M."/>
            <person name="Churcher C."/>
            <person name="Quail M.A."/>
            <person name="Seshasayee A.S."/>
            <person name="Luscombe N.M."/>
            <person name="Abdellah Z."/>
            <person name="Arrosmith C."/>
            <person name="Atkin B."/>
            <person name="Chillingworth T."/>
            <person name="Hauser H."/>
            <person name="Jagels K."/>
            <person name="Moule S."/>
            <person name="Mungall K."/>
            <person name="Norbertczak H."/>
            <person name="Rabbinowitsch E."/>
            <person name="Walker D."/>
            <person name="Whithead S."/>
            <person name="Thomson N.R."/>
            <person name="Rather P.N."/>
            <person name="Parkhill J."/>
            <person name="Mobley H.L.T."/>
        </authorList>
    </citation>
    <scope>NUCLEOTIDE SEQUENCE [LARGE SCALE GENOMIC DNA]</scope>
    <source>
        <strain>HI4320</strain>
    </source>
</reference>
<comment type="function">
    <text evidence="1">Binds to 23S rRNA. Forms part of two intersubunit bridges in the 70S ribosome.</text>
</comment>
<comment type="subunit">
    <text evidence="1">Part of the 50S ribosomal subunit. Forms a cluster with proteins L3 and L19. In the 70S ribosome, L14 and L19 interact and together make contacts with the 16S rRNA in bridges B5 and B8.</text>
</comment>
<comment type="similarity">
    <text evidence="1">Belongs to the universal ribosomal protein uL14 family.</text>
</comment>
<protein>
    <recommendedName>
        <fullName evidence="1">Large ribosomal subunit protein uL14</fullName>
    </recommendedName>
    <alternativeName>
        <fullName evidence="2">50S ribosomal protein L14</fullName>
    </alternativeName>
</protein>
<accession>B4F1J4</accession>
<proteinExistence type="inferred from homology"/>
<sequence>MIQEQTMLNVADNSGARRVMCIKVLGGSHRRYADVGDIIKITIKEAIPRGKVKKGDVLKAVVVRTKKGVRRPDGSVIRFDSNACVLLNNNSEQVIGTRIFGPVTRELRNEKFMKIISLAPEVL</sequence>
<dbReference type="EMBL" id="AM942759">
    <property type="protein sequence ID" value="CAR46397.1"/>
    <property type="molecule type" value="Genomic_DNA"/>
</dbReference>
<dbReference type="RefSeq" id="WP_004246955.1">
    <property type="nucleotide sequence ID" value="NC_010554.1"/>
</dbReference>
<dbReference type="SMR" id="B4F1J4"/>
<dbReference type="EnsemblBacteria" id="CAR46397">
    <property type="protein sequence ID" value="CAR46397"/>
    <property type="gene ID" value="PMI3265"/>
</dbReference>
<dbReference type="GeneID" id="93395994"/>
<dbReference type="KEGG" id="pmr:PMI3265"/>
<dbReference type="eggNOG" id="COG0093">
    <property type="taxonomic scope" value="Bacteria"/>
</dbReference>
<dbReference type="HOGENOM" id="CLU_095071_2_1_6"/>
<dbReference type="Proteomes" id="UP000008319">
    <property type="component" value="Chromosome"/>
</dbReference>
<dbReference type="GO" id="GO:0022625">
    <property type="term" value="C:cytosolic large ribosomal subunit"/>
    <property type="evidence" value="ECO:0007669"/>
    <property type="project" value="TreeGrafter"/>
</dbReference>
<dbReference type="GO" id="GO:0070180">
    <property type="term" value="F:large ribosomal subunit rRNA binding"/>
    <property type="evidence" value="ECO:0007669"/>
    <property type="project" value="TreeGrafter"/>
</dbReference>
<dbReference type="GO" id="GO:0003735">
    <property type="term" value="F:structural constituent of ribosome"/>
    <property type="evidence" value="ECO:0007669"/>
    <property type="project" value="InterPro"/>
</dbReference>
<dbReference type="GO" id="GO:0006412">
    <property type="term" value="P:translation"/>
    <property type="evidence" value="ECO:0007669"/>
    <property type="project" value="UniProtKB-UniRule"/>
</dbReference>
<dbReference type="CDD" id="cd00337">
    <property type="entry name" value="Ribosomal_uL14"/>
    <property type="match status" value="1"/>
</dbReference>
<dbReference type="FunFam" id="2.40.150.20:FF:000001">
    <property type="entry name" value="50S ribosomal protein L14"/>
    <property type="match status" value="1"/>
</dbReference>
<dbReference type="Gene3D" id="2.40.150.20">
    <property type="entry name" value="Ribosomal protein L14"/>
    <property type="match status" value="1"/>
</dbReference>
<dbReference type="HAMAP" id="MF_01367">
    <property type="entry name" value="Ribosomal_uL14"/>
    <property type="match status" value="1"/>
</dbReference>
<dbReference type="InterPro" id="IPR000218">
    <property type="entry name" value="Ribosomal_uL14"/>
</dbReference>
<dbReference type="InterPro" id="IPR005745">
    <property type="entry name" value="Ribosomal_uL14_bac-type"/>
</dbReference>
<dbReference type="InterPro" id="IPR019972">
    <property type="entry name" value="Ribosomal_uL14_CS"/>
</dbReference>
<dbReference type="InterPro" id="IPR036853">
    <property type="entry name" value="Ribosomal_uL14_sf"/>
</dbReference>
<dbReference type="NCBIfam" id="TIGR01067">
    <property type="entry name" value="rplN_bact"/>
    <property type="match status" value="1"/>
</dbReference>
<dbReference type="PANTHER" id="PTHR11761">
    <property type="entry name" value="50S/60S RIBOSOMAL PROTEIN L14/L23"/>
    <property type="match status" value="1"/>
</dbReference>
<dbReference type="PANTHER" id="PTHR11761:SF3">
    <property type="entry name" value="LARGE RIBOSOMAL SUBUNIT PROTEIN UL14M"/>
    <property type="match status" value="1"/>
</dbReference>
<dbReference type="Pfam" id="PF00238">
    <property type="entry name" value="Ribosomal_L14"/>
    <property type="match status" value="1"/>
</dbReference>
<dbReference type="SMART" id="SM01374">
    <property type="entry name" value="Ribosomal_L14"/>
    <property type="match status" value="1"/>
</dbReference>
<dbReference type="SUPFAM" id="SSF50193">
    <property type="entry name" value="Ribosomal protein L14"/>
    <property type="match status" value="1"/>
</dbReference>
<dbReference type="PROSITE" id="PS00049">
    <property type="entry name" value="RIBOSOMAL_L14"/>
    <property type="match status" value="1"/>
</dbReference>
<feature type="chain" id="PRO_1000144313" description="Large ribosomal subunit protein uL14">
    <location>
        <begin position="1"/>
        <end position="123"/>
    </location>
</feature>
<keyword id="KW-1185">Reference proteome</keyword>
<keyword id="KW-0687">Ribonucleoprotein</keyword>
<keyword id="KW-0689">Ribosomal protein</keyword>
<keyword id="KW-0694">RNA-binding</keyword>
<keyword id="KW-0699">rRNA-binding</keyword>
<gene>
    <name evidence="1" type="primary">rplN</name>
    <name type="ordered locus">PMI3265</name>
</gene>
<evidence type="ECO:0000255" key="1">
    <source>
        <dbReference type="HAMAP-Rule" id="MF_01367"/>
    </source>
</evidence>
<evidence type="ECO:0000305" key="2"/>
<organism>
    <name type="scientific">Proteus mirabilis (strain HI4320)</name>
    <dbReference type="NCBI Taxonomy" id="529507"/>
    <lineage>
        <taxon>Bacteria</taxon>
        <taxon>Pseudomonadati</taxon>
        <taxon>Pseudomonadota</taxon>
        <taxon>Gammaproteobacteria</taxon>
        <taxon>Enterobacterales</taxon>
        <taxon>Morganellaceae</taxon>
        <taxon>Proteus</taxon>
    </lineage>
</organism>